<organism>
    <name type="scientific">Nasalis larvatus</name>
    <name type="common">Proboscis monkey</name>
    <dbReference type="NCBI Taxonomy" id="43780"/>
    <lineage>
        <taxon>Eukaryota</taxon>
        <taxon>Metazoa</taxon>
        <taxon>Chordata</taxon>
        <taxon>Craniata</taxon>
        <taxon>Vertebrata</taxon>
        <taxon>Euteleostomi</taxon>
        <taxon>Mammalia</taxon>
        <taxon>Eutheria</taxon>
        <taxon>Euarchontoglires</taxon>
        <taxon>Primates</taxon>
        <taxon>Haplorrhini</taxon>
        <taxon>Catarrhini</taxon>
        <taxon>Cercopithecidae</taxon>
        <taxon>Colobinae</taxon>
        <taxon>Nasalis</taxon>
    </lineage>
</organism>
<keyword id="KW-0158">Chromosome</keyword>
<keyword id="KW-0217">Developmental protein</keyword>
<keyword id="KW-0221">Differentiation</keyword>
<keyword id="KW-0226">DNA condensation</keyword>
<keyword id="KW-0238">DNA-binding</keyword>
<keyword id="KW-0544">Nucleosome core</keyword>
<keyword id="KW-0539">Nucleus</keyword>
<keyword id="KW-0744">Spermatogenesis</keyword>
<comment type="function">
    <text evidence="1">Protamines substitute for histones in the chromatin of sperm during the haploid phase of spermatogenesis. They compact sperm DNA into a highly condensed, stable and inactive complex (By similarity).</text>
</comment>
<comment type="subcellular location">
    <subcellularLocation>
        <location evidence="1">Nucleus</location>
    </subcellularLocation>
    <subcellularLocation>
        <location evidence="1">Chromosome</location>
    </subcellularLocation>
</comment>
<comment type="tissue specificity">
    <text>Testis.</text>
</comment>
<comment type="similarity">
    <text evidence="2">Belongs to the protamine P1 family.</text>
</comment>
<name>HSP1_NASLA</name>
<feature type="chain" id="PRO_0000191506" description="Sperm protamine P1">
    <location>
        <begin position="1"/>
        <end position="51"/>
    </location>
</feature>
<sequence length="51" mass="6584">MAKSRCCGSQSRSRCCRPRQRCRRRRRRSCRARRRAMRCCRRRYRLRCRRY</sequence>
<accession>Q9GKQ3</accession>
<reference key="1">
    <citation type="submission" date="1998-10" db="EMBL/GenBank/DDBJ databases">
        <title>Positive Darwinian selection on the lineage leading to humans.</title>
        <authorList>
            <person name="Karanth P.K."/>
            <person name="Stewart C.-B."/>
            <person name="Holt R.A."/>
            <person name="de Koning J."/>
            <person name="Messier W."/>
        </authorList>
    </citation>
    <scope>NUCLEOTIDE SEQUENCE [GENOMIC DNA]</scope>
</reference>
<evidence type="ECO:0000250" key="1"/>
<evidence type="ECO:0000305" key="2"/>
<gene>
    <name type="primary">PRM1</name>
</gene>
<protein>
    <recommendedName>
        <fullName>Sperm protamine P1</fullName>
    </recommendedName>
</protein>
<proteinExistence type="evidence at transcript level"/>
<dbReference type="EMBL" id="AF119237">
    <property type="protein sequence ID" value="AAG42161.1"/>
    <property type="molecule type" value="Genomic_DNA"/>
</dbReference>
<dbReference type="GO" id="GO:0000786">
    <property type="term" value="C:nucleosome"/>
    <property type="evidence" value="ECO:0007669"/>
    <property type="project" value="UniProtKB-KW"/>
</dbReference>
<dbReference type="GO" id="GO:0005634">
    <property type="term" value="C:nucleus"/>
    <property type="evidence" value="ECO:0007669"/>
    <property type="project" value="UniProtKB-SubCell"/>
</dbReference>
<dbReference type="GO" id="GO:0003677">
    <property type="term" value="F:DNA binding"/>
    <property type="evidence" value="ECO:0007669"/>
    <property type="project" value="UniProtKB-KW"/>
</dbReference>
<dbReference type="GO" id="GO:0030261">
    <property type="term" value="P:chromosome condensation"/>
    <property type="evidence" value="ECO:0007669"/>
    <property type="project" value="UniProtKB-KW"/>
</dbReference>
<dbReference type="GO" id="GO:0035092">
    <property type="term" value="P:sperm DNA condensation"/>
    <property type="evidence" value="ECO:0007669"/>
    <property type="project" value="InterPro"/>
</dbReference>
<dbReference type="InterPro" id="IPR000221">
    <property type="entry name" value="Protamine_P1"/>
</dbReference>
<dbReference type="Pfam" id="PF00260">
    <property type="entry name" value="Protamine_P1"/>
    <property type="match status" value="1"/>
</dbReference>